<evidence type="ECO:0000250" key="1"/>
<evidence type="ECO:0000255" key="2"/>
<evidence type="ECO:0000305" key="3"/>
<sequence length="235" mass="26093">MASPLKTFVLRMPATGLVRSSPKASFSTISAARPASCLSRSPFRKQCFKPAISINKSFSRAVSDKPQPETVQATPQPAPSNVLPPLDWNSFFKLRVKRRRYQMLFSITNGIFAGSGGAIFLSTGSAEPIISQIPLDPFMTLGLMTLAFSGLGWLSGPSVGNQVFYILNRQWKKQMTQKEAIFFERIKRNRVDPTNSSANNPVPDFYGEKISSVAGYRSWLKDQKAFNKKKTANFV</sequence>
<accession>Q4ICM9</accession>
<accession>A0A0E0SHF2</accession>
<accession>V6RG93</accession>
<name>PAM17_GIBZE</name>
<protein>
    <recommendedName>
        <fullName>Presequence translocated-associated motor subunit PAM17, mitochondrial</fullName>
    </recommendedName>
</protein>
<comment type="function">
    <text evidence="1">Component of the PAM complex, a complex required for the translocation of transit peptide-containing proteins from the inner membrane into the mitochondrial matrix in an ATP-dependent manner.</text>
</comment>
<comment type="subunit">
    <text evidence="1">Component of the PAM complex, at least composed of mtHsp70 (SSC1), MGE1, TIM44, PAM16, PAM17 and PAM18.</text>
</comment>
<comment type="subcellular location">
    <subcellularLocation>
        <location evidence="1">Mitochondrion inner membrane</location>
        <topology evidence="1">Multi-pass membrane protein</topology>
    </subcellularLocation>
</comment>
<comment type="similarity">
    <text evidence="3">Belongs to the PAM17 family.</text>
</comment>
<organism>
    <name type="scientific">Gibberella zeae (strain ATCC MYA-4620 / CBS 123657 / FGSC 9075 / NRRL 31084 / PH-1)</name>
    <name type="common">Wheat head blight fungus</name>
    <name type="synonym">Fusarium graminearum</name>
    <dbReference type="NCBI Taxonomy" id="229533"/>
    <lineage>
        <taxon>Eukaryota</taxon>
        <taxon>Fungi</taxon>
        <taxon>Dikarya</taxon>
        <taxon>Ascomycota</taxon>
        <taxon>Pezizomycotina</taxon>
        <taxon>Sordariomycetes</taxon>
        <taxon>Hypocreomycetidae</taxon>
        <taxon>Hypocreales</taxon>
        <taxon>Nectriaceae</taxon>
        <taxon>Fusarium</taxon>
    </lineage>
</organism>
<feature type="transit peptide" description="Mitochondrion" evidence="2">
    <location>
        <begin position="1"/>
        <end position="61"/>
    </location>
</feature>
<feature type="chain" id="PRO_0000043156" description="Presequence translocated-associated motor subunit PAM17, mitochondrial">
    <location>
        <begin position="62"/>
        <end position="235"/>
    </location>
</feature>
<feature type="transmembrane region" description="Helical" evidence="2">
    <location>
        <begin position="103"/>
        <end position="123"/>
    </location>
</feature>
<feature type="transmembrane region" description="Helical" evidence="2">
    <location>
        <begin position="133"/>
        <end position="153"/>
    </location>
</feature>
<gene>
    <name type="primary">PAM17</name>
    <name type="ORF">FGRRES_05029</name>
    <name type="ORF">FGSG_05029</name>
</gene>
<keyword id="KW-0472">Membrane</keyword>
<keyword id="KW-0496">Mitochondrion</keyword>
<keyword id="KW-0999">Mitochondrion inner membrane</keyword>
<keyword id="KW-0653">Protein transport</keyword>
<keyword id="KW-1185">Reference proteome</keyword>
<keyword id="KW-0809">Transit peptide</keyword>
<keyword id="KW-0811">Translocation</keyword>
<keyword id="KW-0812">Transmembrane</keyword>
<keyword id="KW-1133">Transmembrane helix</keyword>
<keyword id="KW-0813">Transport</keyword>
<proteinExistence type="inferred from homology"/>
<dbReference type="EMBL" id="DS231665">
    <property type="protein sequence ID" value="ESU10935.1"/>
    <property type="molecule type" value="Genomic_DNA"/>
</dbReference>
<dbReference type="EMBL" id="HG970334">
    <property type="protein sequence ID" value="CEF85865.1"/>
    <property type="molecule type" value="Genomic_DNA"/>
</dbReference>
<dbReference type="RefSeq" id="XP_011323511.1">
    <property type="nucleotide sequence ID" value="XM_011325209.1"/>
</dbReference>
<dbReference type="FunCoup" id="Q4ICM9">
    <property type="interactions" value="53"/>
</dbReference>
<dbReference type="STRING" id="229533.Q4ICM9"/>
<dbReference type="GeneID" id="23552226"/>
<dbReference type="KEGG" id="fgr:FGSG_05029"/>
<dbReference type="VEuPathDB" id="FungiDB:FGRAMPH1_01G16917"/>
<dbReference type="eggNOG" id="ENOG502S1B1">
    <property type="taxonomic scope" value="Eukaryota"/>
</dbReference>
<dbReference type="HOGENOM" id="CLU_068297_0_0_1"/>
<dbReference type="InParanoid" id="Q4ICM9"/>
<dbReference type="OrthoDB" id="95117at110618"/>
<dbReference type="Proteomes" id="UP000070720">
    <property type="component" value="Chromosome 3"/>
</dbReference>
<dbReference type="GO" id="GO:0001405">
    <property type="term" value="C:PAM complex, Tim23 associated import motor"/>
    <property type="evidence" value="ECO:0007669"/>
    <property type="project" value="InterPro"/>
</dbReference>
<dbReference type="GO" id="GO:0030150">
    <property type="term" value="P:protein import into mitochondrial matrix"/>
    <property type="evidence" value="ECO:0007669"/>
    <property type="project" value="TreeGrafter"/>
</dbReference>
<dbReference type="InterPro" id="IPR013875">
    <property type="entry name" value="Pam17"/>
</dbReference>
<dbReference type="PANTHER" id="PTHR28021">
    <property type="entry name" value="PRESEQUENCE TRANSLOCATED-ASSOCIATED MOTOR SUBUNIT PAM17, MITOCHONDRIAL"/>
    <property type="match status" value="1"/>
</dbReference>
<dbReference type="PANTHER" id="PTHR28021:SF1">
    <property type="entry name" value="PRESEQUENCE TRANSLOCATED-ASSOCIATED MOTOR SUBUNIT PAM17, MITOCHONDRIAL"/>
    <property type="match status" value="1"/>
</dbReference>
<dbReference type="Pfam" id="PF08566">
    <property type="entry name" value="Pam17"/>
    <property type="match status" value="1"/>
</dbReference>
<reference key="1">
    <citation type="journal article" date="2007" name="Science">
        <title>The Fusarium graminearum genome reveals a link between localized polymorphism and pathogen specialization.</title>
        <authorList>
            <person name="Cuomo C.A."/>
            <person name="Gueldener U."/>
            <person name="Xu J.-R."/>
            <person name="Trail F."/>
            <person name="Turgeon B.G."/>
            <person name="Di Pietro A."/>
            <person name="Walton J.D."/>
            <person name="Ma L.-J."/>
            <person name="Baker S.E."/>
            <person name="Rep M."/>
            <person name="Adam G."/>
            <person name="Antoniw J."/>
            <person name="Baldwin T."/>
            <person name="Calvo S.E."/>
            <person name="Chang Y.-L."/>
            <person name="DeCaprio D."/>
            <person name="Gale L.R."/>
            <person name="Gnerre S."/>
            <person name="Goswami R.S."/>
            <person name="Hammond-Kosack K."/>
            <person name="Harris L.J."/>
            <person name="Hilburn K."/>
            <person name="Kennell J.C."/>
            <person name="Kroken S."/>
            <person name="Magnuson J.K."/>
            <person name="Mannhaupt G."/>
            <person name="Mauceli E.W."/>
            <person name="Mewes H.-W."/>
            <person name="Mitterbauer R."/>
            <person name="Muehlbauer G."/>
            <person name="Muensterkoetter M."/>
            <person name="Nelson D."/>
            <person name="O'Donnell K."/>
            <person name="Ouellet T."/>
            <person name="Qi W."/>
            <person name="Quesneville H."/>
            <person name="Roncero M.I.G."/>
            <person name="Seong K.-Y."/>
            <person name="Tetko I.V."/>
            <person name="Urban M."/>
            <person name="Waalwijk C."/>
            <person name="Ward T.J."/>
            <person name="Yao J."/>
            <person name="Birren B.W."/>
            <person name="Kistler H.C."/>
        </authorList>
    </citation>
    <scope>NUCLEOTIDE SEQUENCE [LARGE SCALE GENOMIC DNA]</scope>
    <source>
        <strain>ATCC MYA-4620 / CBS 123657 / FGSC 9075 / NRRL 31084 / PH-1</strain>
    </source>
</reference>
<reference key="2">
    <citation type="journal article" date="2010" name="Nature">
        <title>Comparative genomics reveals mobile pathogenicity chromosomes in Fusarium.</title>
        <authorList>
            <person name="Ma L.-J."/>
            <person name="van der Does H.C."/>
            <person name="Borkovich K.A."/>
            <person name="Coleman J.J."/>
            <person name="Daboussi M.-J."/>
            <person name="Di Pietro A."/>
            <person name="Dufresne M."/>
            <person name="Freitag M."/>
            <person name="Grabherr M."/>
            <person name="Henrissat B."/>
            <person name="Houterman P.M."/>
            <person name="Kang S."/>
            <person name="Shim W.-B."/>
            <person name="Woloshuk C."/>
            <person name="Xie X."/>
            <person name="Xu J.-R."/>
            <person name="Antoniw J."/>
            <person name="Baker S.E."/>
            <person name="Bluhm B.H."/>
            <person name="Breakspear A."/>
            <person name="Brown D.W."/>
            <person name="Butchko R.A.E."/>
            <person name="Chapman S."/>
            <person name="Coulson R."/>
            <person name="Coutinho P.M."/>
            <person name="Danchin E.G.J."/>
            <person name="Diener A."/>
            <person name="Gale L.R."/>
            <person name="Gardiner D.M."/>
            <person name="Goff S."/>
            <person name="Hammond-Kosack K.E."/>
            <person name="Hilburn K."/>
            <person name="Hua-Van A."/>
            <person name="Jonkers W."/>
            <person name="Kazan K."/>
            <person name="Kodira C.D."/>
            <person name="Koehrsen M."/>
            <person name="Kumar L."/>
            <person name="Lee Y.-H."/>
            <person name="Li L."/>
            <person name="Manners J.M."/>
            <person name="Miranda-Saavedra D."/>
            <person name="Mukherjee M."/>
            <person name="Park G."/>
            <person name="Park J."/>
            <person name="Park S.-Y."/>
            <person name="Proctor R.H."/>
            <person name="Regev A."/>
            <person name="Ruiz-Roldan M.C."/>
            <person name="Sain D."/>
            <person name="Sakthikumar S."/>
            <person name="Sykes S."/>
            <person name="Schwartz D.C."/>
            <person name="Turgeon B.G."/>
            <person name="Wapinski I."/>
            <person name="Yoder O."/>
            <person name="Young S."/>
            <person name="Zeng Q."/>
            <person name="Zhou S."/>
            <person name="Galagan J."/>
            <person name="Cuomo C.A."/>
            <person name="Kistler H.C."/>
            <person name="Rep M."/>
        </authorList>
    </citation>
    <scope>GENOME REANNOTATION</scope>
    <source>
        <strain>ATCC MYA-4620 / CBS 123657 / FGSC 9075 / NRRL 31084 / PH-1</strain>
    </source>
</reference>
<reference key="3">
    <citation type="journal article" date="2015" name="BMC Genomics">
        <title>The completed genome sequence of the pathogenic ascomycete fungus Fusarium graminearum.</title>
        <authorList>
            <person name="King R."/>
            <person name="Urban M."/>
            <person name="Hammond-Kosack M.C.U."/>
            <person name="Hassani-Pak K."/>
            <person name="Hammond-Kosack K.E."/>
        </authorList>
    </citation>
    <scope>NUCLEOTIDE SEQUENCE [LARGE SCALE GENOMIC DNA]</scope>
    <source>
        <strain>ATCC MYA-4620 / CBS 123657 / FGSC 9075 / NRRL 31084 / PH-1</strain>
    </source>
</reference>